<feature type="chain" id="PRO_0000315710" description="LRP2-binding protein">
    <location>
        <begin position="1"/>
        <end position="346"/>
    </location>
</feature>
<feature type="repeat" description="TPR">
    <location>
        <begin position="58"/>
        <end position="91"/>
    </location>
</feature>
<feature type="repeat" description="Sel1-like 1">
    <location>
        <begin position="92"/>
        <end position="124"/>
    </location>
</feature>
<feature type="repeat" description="Sel1-like 2">
    <location>
        <begin position="132"/>
        <end position="167"/>
    </location>
</feature>
<feature type="repeat" description="Sel1-like 3">
    <location>
        <begin position="172"/>
        <end position="205"/>
    </location>
</feature>
<feature type="repeat" description="Sel1-like 4">
    <location>
        <begin position="206"/>
        <end position="241"/>
    </location>
</feature>
<feature type="repeat" description="Sel1-like 5">
    <location>
        <begin position="242"/>
        <end position="276"/>
    </location>
</feature>
<feature type="repeat" description="Sel1-like 6">
    <location>
        <begin position="296"/>
        <end position="331"/>
    </location>
</feature>
<proteinExistence type="evidence at transcript level"/>
<evidence type="ECO:0000250" key="1"/>
<sequence length="346" mass="39633">MKLTSEKLPKNPFSLSQYAAKQQTFFQWKKEKPDYYRHANLVDTALQFLKERIRKGDAMAYFLRGQLYFEEGWYEEALAQFEEIQEKDHQAIYQLGVMYYDGLGTVADAEKGVGYMKKILDSSCPQTMHLKFAAAYNLGRAYFEGKGVKRSDEEAERLWLYAADNGNPKASVKAQSILGLFYSMKEPKDLEKAFFWHSEACGNGNLESQGALGLMYLYGQGIRQDTDAALHCLREAAERGNVYAQGILVEYYYKMKFFTKCVSFSKRIADYDEVHDIPMIAHVTDCLPEFISKGMAMASFYYARCLQLGLGITKDEASAKHYYSKACRLNPTLADELHSLLIHQRI</sequence>
<reference key="1">
    <citation type="journal article" date="2004" name="Genome Res.">
        <title>The status, quality, and expansion of the NIH full-length cDNA project: the Mammalian Gene Collection (MGC).</title>
        <authorList>
            <consortium name="The MGC Project Team"/>
        </authorList>
    </citation>
    <scope>NUCLEOTIDE SEQUENCE [LARGE SCALE MRNA]</scope>
    <source>
        <tissue>Testis</tissue>
    </source>
</reference>
<organism>
    <name type="scientific">Rattus norvegicus</name>
    <name type="common">Rat</name>
    <dbReference type="NCBI Taxonomy" id="10116"/>
    <lineage>
        <taxon>Eukaryota</taxon>
        <taxon>Metazoa</taxon>
        <taxon>Chordata</taxon>
        <taxon>Craniata</taxon>
        <taxon>Vertebrata</taxon>
        <taxon>Euteleostomi</taxon>
        <taxon>Mammalia</taxon>
        <taxon>Eutheria</taxon>
        <taxon>Euarchontoglires</taxon>
        <taxon>Glires</taxon>
        <taxon>Rodentia</taxon>
        <taxon>Myomorpha</taxon>
        <taxon>Muroidea</taxon>
        <taxon>Muridae</taxon>
        <taxon>Murinae</taxon>
        <taxon>Rattus</taxon>
    </lineage>
</organism>
<gene>
    <name type="primary">Lrp2bp</name>
</gene>
<dbReference type="EMBL" id="BC092575">
    <property type="protein sequence ID" value="AAH92575.1"/>
    <property type="molecule type" value="mRNA"/>
</dbReference>
<dbReference type="RefSeq" id="NP_001017443.1">
    <property type="nucleotide sequence ID" value="NM_001017443.1"/>
</dbReference>
<dbReference type="SMR" id="Q569C2"/>
<dbReference type="FunCoup" id="Q569C2">
    <property type="interactions" value="80"/>
</dbReference>
<dbReference type="STRING" id="10116.ENSRNOP00000041732"/>
<dbReference type="PhosphoSitePlus" id="Q569C2"/>
<dbReference type="PaxDb" id="10116-ENSRNOP00000041732"/>
<dbReference type="GeneID" id="290753"/>
<dbReference type="KEGG" id="rno:290753"/>
<dbReference type="AGR" id="RGD:1305896"/>
<dbReference type="CTD" id="55805"/>
<dbReference type="RGD" id="1305896">
    <property type="gene designation" value="Lrp2bp"/>
</dbReference>
<dbReference type="eggNOG" id="KOG1550">
    <property type="taxonomic scope" value="Eukaryota"/>
</dbReference>
<dbReference type="InParanoid" id="Q569C2"/>
<dbReference type="PhylomeDB" id="Q569C2"/>
<dbReference type="PRO" id="PR:Q569C2"/>
<dbReference type="Proteomes" id="UP000002494">
    <property type="component" value="Unplaced"/>
</dbReference>
<dbReference type="GO" id="GO:0005737">
    <property type="term" value="C:cytoplasm"/>
    <property type="evidence" value="ECO:0007669"/>
    <property type="project" value="UniProtKB-SubCell"/>
</dbReference>
<dbReference type="FunFam" id="1.25.40.10:FF:001421">
    <property type="entry name" value="LRP2-binding protein"/>
    <property type="match status" value="1"/>
</dbReference>
<dbReference type="Gene3D" id="1.25.40.10">
    <property type="entry name" value="Tetratricopeptide repeat domain"/>
    <property type="match status" value="1"/>
</dbReference>
<dbReference type="InterPro" id="IPR052323">
    <property type="entry name" value="LRP2-binding"/>
</dbReference>
<dbReference type="InterPro" id="IPR006597">
    <property type="entry name" value="Sel1-like"/>
</dbReference>
<dbReference type="InterPro" id="IPR011990">
    <property type="entry name" value="TPR-like_helical_dom_sf"/>
</dbReference>
<dbReference type="InterPro" id="IPR019734">
    <property type="entry name" value="TPR_rpt"/>
</dbReference>
<dbReference type="PANTHER" id="PTHR44554">
    <property type="entry name" value="LRP2-BINDING PROTEIN"/>
    <property type="match status" value="1"/>
</dbReference>
<dbReference type="PANTHER" id="PTHR44554:SF1">
    <property type="entry name" value="LRP2-BINDING PROTEIN"/>
    <property type="match status" value="1"/>
</dbReference>
<dbReference type="Pfam" id="PF08238">
    <property type="entry name" value="Sel1"/>
    <property type="match status" value="5"/>
</dbReference>
<dbReference type="SMART" id="SM00671">
    <property type="entry name" value="SEL1"/>
    <property type="match status" value="5"/>
</dbReference>
<dbReference type="SUPFAM" id="SSF81901">
    <property type="entry name" value="HCP-like"/>
    <property type="match status" value="1"/>
</dbReference>
<dbReference type="PROSITE" id="PS50005">
    <property type="entry name" value="TPR"/>
    <property type="match status" value="1"/>
</dbReference>
<dbReference type="PROSITE" id="PS50293">
    <property type="entry name" value="TPR_REGION"/>
    <property type="match status" value="1"/>
</dbReference>
<comment type="function">
    <text evidence="1">May act as an adapter that regulates LRP2 function.</text>
</comment>
<comment type="subunit">
    <text evidence="1">Interacts with LRP2.</text>
</comment>
<comment type="subcellular location">
    <subcellularLocation>
        <location evidence="1">Cytoplasm</location>
    </subcellularLocation>
    <text evidence="1">Detected in a vesicular staining pattern close to the plasma membrane and throughout the cytoplasm.</text>
</comment>
<protein>
    <recommendedName>
        <fullName>LRP2-binding protein</fullName>
    </recommendedName>
</protein>
<name>LR2BP_RAT</name>
<accession>Q569C2</accession>
<keyword id="KW-0963">Cytoplasm</keyword>
<keyword id="KW-1185">Reference proteome</keyword>
<keyword id="KW-0677">Repeat</keyword>
<keyword id="KW-0802">TPR repeat</keyword>